<dbReference type="EC" id="2.7.11.12" evidence="2"/>
<dbReference type="EMBL" id="AAKM01000002">
    <property type="protein sequence ID" value="EDL46881.1"/>
    <property type="molecule type" value="Genomic_DNA"/>
</dbReference>
<dbReference type="RefSeq" id="XP_001616608.1">
    <property type="nucleotide sequence ID" value="XM_001616558.1"/>
</dbReference>
<dbReference type="PDB" id="4RZ7">
    <property type="method" value="X-ray"/>
    <property type="resolution" value="2.35 A"/>
    <property type="chains" value="A=1-846"/>
</dbReference>
<dbReference type="PDB" id="5DYL">
    <property type="method" value="X-ray"/>
    <property type="resolution" value="2.40 A"/>
    <property type="chains" value="A=1-846"/>
</dbReference>
<dbReference type="PDB" id="5DZC">
    <property type="method" value="X-ray"/>
    <property type="resolution" value="2.30 A"/>
    <property type="chains" value="A=1-846"/>
</dbReference>
<dbReference type="PDB" id="5EZR">
    <property type="method" value="X-ray"/>
    <property type="resolution" value="2.50 A"/>
    <property type="chains" value="A=1-846"/>
</dbReference>
<dbReference type="PDB" id="5F0A">
    <property type="method" value="X-ray"/>
    <property type="resolution" value="2.60 A"/>
    <property type="chains" value="A=1-846"/>
</dbReference>
<dbReference type="PDB" id="5FET">
    <property type="method" value="X-ray"/>
    <property type="resolution" value="3.07 A"/>
    <property type="chains" value="A=1-846"/>
</dbReference>
<dbReference type="PDBsum" id="4RZ7"/>
<dbReference type="PDBsum" id="5DYL"/>
<dbReference type="PDBsum" id="5DZC"/>
<dbReference type="PDBsum" id="5EZR"/>
<dbReference type="PDBsum" id="5F0A"/>
<dbReference type="PDBsum" id="5FET"/>
<dbReference type="SMR" id="A5K0N4"/>
<dbReference type="FunCoup" id="A5K0N4">
    <property type="interactions" value="4"/>
</dbReference>
<dbReference type="STRING" id="126793.A5K0N4"/>
<dbReference type="EnsemblProtists" id="EDL46881">
    <property type="protein sequence ID" value="EDL46881"/>
    <property type="gene ID" value="PVX_084705"/>
</dbReference>
<dbReference type="GeneID" id="5475916"/>
<dbReference type="KEGG" id="pvx:PVX_084705"/>
<dbReference type="InParanoid" id="A5K0N4"/>
<dbReference type="OMA" id="ESCLADC"/>
<dbReference type="BRENDA" id="2.7.11.12">
    <property type="organism ID" value="4894"/>
</dbReference>
<dbReference type="EvolutionaryTrace" id="A5K0N4"/>
<dbReference type="Proteomes" id="UP000008333">
    <property type="component" value="Chromosome 13"/>
</dbReference>
<dbReference type="GO" id="GO:0005952">
    <property type="term" value="C:cAMP-dependent protein kinase complex"/>
    <property type="evidence" value="ECO:0007669"/>
    <property type="project" value="TreeGrafter"/>
</dbReference>
<dbReference type="GO" id="GO:0005789">
    <property type="term" value="C:endoplasmic reticulum membrane"/>
    <property type="evidence" value="ECO:0007669"/>
    <property type="project" value="UniProtKB-SubCell"/>
</dbReference>
<dbReference type="GO" id="GO:0005524">
    <property type="term" value="F:ATP binding"/>
    <property type="evidence" value="ECO:0007669"/>
    <property type="project" value="UniProtKB-KW"/>
</dbReference>
<dbReference type="GO" id="GO:0004691">
    <property type="term" value="F:cAMP-dependent protein kinase activity"/>
    <property type="evidence" value="ECO:0007669"/>
    <property type="project" value="TreeGrafter"/>
</dbReference>
<dbReference type="GO" id="GO:0030553">
    <property type="term" value="F:cGMP binding"/>
    <property type="evidence" value="ECO:0007669"/>
    <property type="project" value="UniProtKB-KW"/>
</dbReference>
<dbReference type="GO" id="GO:0004692">
    <property type="term" value="F:cGMP-dependent protein kinase activity"/>
    <property type="evidence" value="ECO:0007669"/>
    <property type="project" value="UniProtKB-EC"/>
</dbReference>
<dbReference type="GO" id="GO:0046872">
    <property type="term" value="F:metal ion binding"/>
    <property type="evidence" value="ECO:0007669"/>
    <property type="project" value="UniProtKB-KW"/>
</dbReference>
<dbReference type="CDD" id="cd00038">
    <property type="entry name" value="CAP_ED"/>
    <property type="match status" value="3"/>
</dbReference>
<dbReference type="CDD" id="cd05572">
    <property type="entry name" value="STKc_cGK"/>
    <property type="match status" value="1"/>
</dbReference>
<dbReference type="FunFam" id="1.10.510.10:FF:000567">
    <property type="entry name" value="cGMP-dependent protein kinase"/>
    <property type="match status" value="1"/>
</dbReference>
<dbReference type="FunFam" id="2.60.120.10:FF:000068">
    <property type="entry name" value="cGMP-dependent protein kinase"/>
    <property type="match status" value="1"/>
</dbReference>
<dbReference type="Gene3D" id="2.60.120.10">
    <property type="entry name" value="Jelly Rolls"/>
    <property type="match status" value="4"/>
</dbReference>
<dbReference type="Gene3D" id="3.30.200.20">
    <property type="entry name" value="Phosphorylase Kinase, domain 1"/>
    <property type="match status" value="1"/>
</dbReference>
<dbReference type="Gene3D" id="1.10.510.10">
    <property type="entry name" value="Transferase(Phosphotransferase) domain 1"/>
    <property type="match status" value="1"/>
</dbReference>
<dbReference type="InterPro" id="IPR000961">
    <property type="entry name" value="AGC-kinase_C"/>
</dbReference>
<dbReference type="InterPro" id="IPR002374">
    <property type="entry name" value="cGMP_dep_kinase"/>
</dbReference>
<dbReference type="InterPro" id="IPR018488">
    <property type="entry name" value="cNMP-bd_CS"/>
</dbReference>
<dbReference type="InterPro" id="IPR000595">
    <property type="entry name" value="cNMP-bd_dom"/>
</dbReference>
<dbReference type="InterPro" id="IPR018490">
    <property type="entry name" value="cNMP-bd_dom_sf"/>
</dbReference>
<dbReference type="InterPro" id="IPR011009">
    <property type="entry name" value="Kinase-like_dom_sf"/>
</dbReference>
<dbReference type="InterPro" id="IPR000719">
    <property type="entry name" value="Prot_kinase_dom"/>
</dbReference>
<dbReference type="InterPro" id="IPR017441">
    <property type="entry name" value="Protein_kinase_ATP_BS"/>
</dbReference>
<dbReference type="InterPro" id="IPR014710">
    <property type="entry name" value="RmlC-like_jellyroll"/>
</dbReference>
<dbReference type="InterPro" id="IPR008271">
    <property type="entry name" value="Ser/Thr_kinase_AS"/>
</dbReference>
<dbReference type="InterPro" id="IPR035014">
    <property type="entry name" value="STKc_cGK"/>
</dbReference>
<dbReference type="PANTHER" id="PTHR24353:SF37">
    <property type="entry name" value="CAMP-DEPENDENT PROTEIN KINASE CATALYTIC SUBUNIT PRKX"/>
    <property type="match status" value="1"/>
</dbReference>
<dbReference type="PANTHER" id="PTHR24353">
    <property type="entry name" value="CYCLIC NUCLEOTIDE-DEPENDENT PROTEIN KINASE"/>
    <property type="match status" value="1"/>
</dbReference>
<dbReference type="Pfam" id="PF00027">
    <property type="entry name" value="cNMP_binding"/>
    <property type="match status" value="3"/>
</dbReference>
<dbReference type="Pfam" id="PF00069">
    <property type="entry name" value="Pkinase"/>
    <property type="match status" value="1"/>
</dbReference>
<dbReference type="PIRSF" id="PIRSF000559">
    <property type="entry name" value="cGMP-dep_kinase"/>
    <property type="match status" value="1"/>
</dbReference>
<dbReference type="PRINTS" id="PR00103">
    <property type="entry name" value="CAMPKINASE"/>
</dbReference>
<dbReference type="SMART" id="SM00100">
    <property type="entry name" value="cNMP"/>
    <property type="match status" value="4"/>
</dbReference>
<dbReference type="SMART" id="SM00220">
    <property type="entry name" value="S_TKc"/>
    <property type="match status" value="1"/>
</dbReference>
<dbReference type="SUPFAM" id="SSF51206">
    <property type="entry name" value="cAMP-binding domain-like"/>
    <property type="match status" value="4"/>
</dbReference>
<dbReference type="SUPFAM" id="SSF56112">
    <property type="entry name" value="Protein kinase-like (PK-like)"/>
    <property type="match status" value="1"/>
</dbReference>
<dbReference type="PROSITE" id="PS51285">
    <property type="entry name" value="AGC_KINASE_CTER"/>
    <property type="match status" value="1"/>
</dbReference>
<dbReference type="PROSITE" id="PS00888">
    <property type="entry name" value="CNMP_BINDING_1"/>
    <property type="match status" value="3"/>
</dbReference>
<dbReference type="PROSITE" id="PS00889">
    <property type="entry name" value="CNMP_BINDING_2"/>
    <property type="match status" value="3"/>
</dbReference>
<dbReference type="PROSITE" id="PS50042">
    <property type="entry name" value="CNMP_BINDING_3"/>
    <property type="match status" value="4"/>
</dbReference>
<dbReference type="PROSITE" id="PS00107">
    <property type="entry name" value="PROTEIN_KINASE_ATP"/>
    <property type="match status" value="1"/>
</dbReference>
<dbReference type="PROSITE" id="PS50011">
    <property type="entry name" value="PROTEIN_KINASE_DOM"/>
    <property type="match status" value="1"/>
</dbReference>
<dbReference type="PROSITE" id="PS00108">
    <property type="entry name" value="PROTEIN_KINASE_ST"/>
    <property type="match status" value="1"/>
</dbReference>
<reference evidence="10" key="1">
    <citation type="journal article" date="2008" name="Nature">
        <title>Comparative genomics of the neglected human malaria parasite Plasmodium vivax.</title>
        <authorList>
            <person name="Carlton J.M."/>
            <person name="Adams J.H."/>
            <person name="Silva J.C."/>
            <person name="Bidwell S.L."/>
            <person name="Lorenzi H."/>
            <person name="Caler E."/>
            <person name="Crabtree J."/>
            <person name="Angiuoli S.V."/>
            <person name="Merino E.F."/>
            <person name="Amedeo P."/>
            <person name="Cheng Q."/>
            <person name="Coulson R.M.R."/>
            <person name="Crabb B.S."/>
            <person name="del Portillo H.A."/>
            <person name="Essien K."/>
            <person name="Feldblyum T.V."/>
            <person name="Fernandez-Becerra C."/>
            <person name="Gilson P.R."/>
            <person name="Gueye A.H."/>
            <person name="Guo X."/>
            <person name="Kang'a S."/>
            <person name="Kooij T.W.A."/>
            <person name="Korsinczky M."/>
            <person name="Meyer E.V.-S."/>
            <person name="Nene V."/>
            <person name="Paulsen I."/>
            <person name="White O."/>
            <person name="Ralph S.A."/>
            <person name="Ren Q."/>
            <person name="Sargeant T.J."/>
            <person name="Salzberg S.L."/>
            <person name="Stoeckert C.J."/>
            <person name="Sullivan S.A."/>
            <person name="Yamamoto M.M."/>
            <person name="Hoffman S.L."/>
            <person name="Wortman J.R."/>
            <person name="Gardner M.J."/>
            <person name="Galinski M.R."/>
            <person name="Barnwell J.W."/>
            <person name="Fraser-Liggett C.M."/>
        </authorList>
    </citation>
    <scope>NUCLEOTIDE SEQUENCE [LARGE SCALE GENOMIC DNA]</scope>
    <source>
        <strain evidence="10">Salvador I</strain>
    </source>
</reference>
<reference evidence="11 14 15 16" key="2">
    <citation type="journal article" date="2017" name="Nat. Commun.">
        <title>A potent series targeting the malarial cGMP-dependent protein kinase clears infection and blocks transmission.</title>
        <authorList>
            <person name="Baker D.A."/>
            <person name="Stewart L.B."/>
            <person name="Large J.M."/>
            <person name="Bowyer P.W."/>
            <person name="Ansell K.H."/>
            <person name="Jimenez-Diaz M.B."/>
            <person name="El Bakkouri M."/>
            <person name="Birchall K."/>
            <person name="Dechering K.J."/>
            <person name="Bouloc N.S."/>
            <person name="Coombs P.J."/>
            <person name="Whalley D."/>
            <person name="Harding D.J."/>
            <person name="Smiljanic-Hurley E."/>
            <person name="Wheldon M.C."/>
            <person name="Walker E.M."/>
            <person name="Dessens J.T."/>
            <person name="Lafuente M.J."/>
            <person name="Sanz L.M."/>
            <person name="Gamo F.J."/>
            <person name="Ferrer S.B."/>
            <person name="Hui R."/>
            <person name="Bousema T."/>
            <person name="Angulo-Barturen I."/>
            <person name="Merritt A.T."/>
            <person name="Croft S.L."/>
            <person name="Gutteridge W.E."/>
            <person name="Kettleborough C.A."/>
            <person name="Osborne S.A."/>
        </authorList>
    </citation>
    <scope>X-RAY CRYSTALLOGRAPHY (2.50 ANGSTROMS) IN COMPLEX WITH INHIBITORS</scope>
</reference>
<reference evidence="12 13" key="3">
    <citation type="journal article" date="2019" name="Proc. Natl. Acad. Sci. U.S.A.">
        <title>Structures of the cGMP-dependent protein kinase in malaria parasites reveal a unique structural relay mechanism for activation.</title>
        <authorList>
            <person name="El Bakkouri M."/>
            <person name="Kouidmi I."/>
            <person name="Wernimont A."/>
            <person name="Amani M."/>
            <person name="Hutchinson A."/>
            <person name="Loppnau P."/>
            <person name="Kim J.J."/>
            <person name="Flueck C."/>
            <person name="Walker J.R."/>
            <person name="Seitova A."/>
            <person name="Senisterra G."/>
            <person name="Kakihara Y."/>
            <person name="Kim C."/>
            <person name="Blackman M.J."/>
            <person name="Calmettes C."/>
            <person name="Baker D.A."/>
            <person name="Hui R."/>
        </authorList>
    </citation>
    <scope>X-RAY CRYSTALLOGRAPHY (2.30 ANGSTROMS) IN COMPLEX WITH ATP ANALOG</scope>
</reference>
<protein>
    <recommendedName>
        <fullName evidence="8">cGMP-dependent protein kinase</fullName>
        <ecNumber evidence="2">2.7.11.12</ecNumber>
    </recommendedName>
</protein>
<keyword id="KW-0002">3D-structure</keyword>
<keyword id="KW-0067">ATP-binding</keyword>
<keyword id="KW-0140">cGMP</keyword>
<keyword id="KW-0142">cGMP-binding</keyword>
<keyword id="KW-0963">Cytoplasm</keyword>
<keyword id="KW-0256">Endoplasmic reticulum</keyword>
<keyword id="KW-0418">Kinase</keyword>
<keyword id="KW-0460">Magnesium</keyword>
<keyword id="KW-0472">Membrane</keyword>
<keyword id="KW-0479">Metal-binding</keyword>
<keyword id="KW-0547">Nucleotide-binding</keyword>
<keyword id="KW-1185">Reference proteome</keyword>
<keyword id="KW-0723">Serine/threonine-protein kinase</keyword>
<keyword id="KW-0808">Transferase</keyword>
<accession>A5K0N4</accession>
<sequence length="846" mass="96548">MRCNERNKKKAIFSNDDFSGEDTLMEDHLQLREKLSEDIEMIKASLKNNLVCSTLNDNEILTLSNYMQFFVFKGGDLVIKQGEKGSYFFIINSGKFDVYVNDKKVKSMGKGSSFGEAALIHNTQRSATIMAETDGTLWGVQRSTFRATLKQLSNRNFNENRSFIDSVSVFDMLTEAQKNMITNACVIQMFKPGETIVKQGDYGDVLFILKEGKATVFINDKEIRVLNKGSYFGERALLYDEPRSATIIAKEPTACASICRKLLNIVLGNLQVVLFRNIMTEALQQSEIFRQFSAEQLNDLADTAIVRDYPANYHILHKDKVKSVKYLIVLEGKVELFLDDESIGILTRGKSFGDQYVLNQKQKFRHTVKSLDVCKIALITESCLADCLGDNNIDASIDHNNKKSIIKKMYIFRYLSEQQCNLLIEAFRTTRYEEGDYIIQEGEVGSRFYIIKNGEVEVTKNGKRLRTLGKNDYFGERALLYDEPRTASIISKATSVECWFVDKSVFLQIIQGPMLTHLEERIKMQDTKVEMHELETERIIGRGTFGTVKLVHHKPTQIRYALKCVSKRSIISLNQQNNIKLEREITAENDHPFIIRLVRTFKDSNCFYFLTELVTGGELYDAIRKLGLLSKPQAQFYLGSIILAIEYLHERNIVYRDLKPENILLDKQGYVKLIDFGCAKKIQGRAYTLVGTPHYMAPEVILGKGYGCTVDIWALGVCLYEFICGPLPFGNDQEDQLEIFRDILTGQLTFPDYVSDQDSINLMKRLLCRLPQGRIGCSINGFKDIKEHAFFGNFNWDKLAGRLLEPPLVSKGETYAEDIDIKQIEEEDALNEGEPLDGDDSWDVDF</sequence>
<feature type="chain" id="PRO_0000451909" description="cGMP-dependent protein kinase">
    <location>
        <begin position="1"/>
        <end position="846"/>
    </location>
</feature>
<feature type="domain" description="Protein kinase" evidence="4">
    <location>
        <begin position="534"/>
        <end position="791"/>
    </location>
</feature>
<feature type="domain" description="AGC-kinase C-terminal" evidence="5">
    <location>
        <begin position="792"/>
        <end position="846"/>
    </location>
</feature>
<feature type="region of interest" description="Autoinhibitory segment" evidence="2">
    <location>
        <begin position="1"/>
        <end position="22"/>
    </location>
</feature>
<feature type="region of interest" description="cNMP-binding domain 1" evidence="3">
    <location>
        <begin position="51"/>
        <end position="166"/>
    </location>
</feature>
<feature type="region of interest" description="cNMP-binding domain 2" evidence="3">
    <location>
        <begin position="169"/>
        <end position="268"/>
    </location>
</feature>
<feature type="region of interest" description="cNMP-binding domain 3" evidence="3">
    <location>
        <begin position="288"/>
        <end position="391"/>
    </location>
</feature>
<feature type="region of interest" description="cNMP-binding domain 4" evidence="3">
    <location>
        <begin position="411"/>
        <end position="510"/>
    </location>
</feature>
<feature type="region of interest" description="Disordered" evidence="6">
    <location>
        <begin position="824"/>
        <end position="846"/>
    </location>
</feature>
<feature type="compositionally biased region" description="Acidic residues" evidence="6">
    <location>
        <begin position="825"/>
        <end position="846"/>
    </location>
</feature>
<feature type="active site" description="Proton acceptor" evidence="4">
    <location>
        <position position="657"/>
    </location>
</feature>
<feature type="binding site" evidence="2">
    <location>
        <position position="106"/>
    </location>
    <ligand>
        <name>3',5'-cyclic GMP</name>
        <dbReference type="ChEBI" id="CHEBI:57746"/>
        <label>1</label>
        <note>allosteric activator</note>
    </ligand>
</feature>
<feature type="binding site" evidence="2">
    <location>
        <position position="115"/>
    </location>
    <ligand>
        <name>3',5'-cyclic GMP</name>
        <dbReference type="ChEBI" id="CHEBI:57746"/>
        <label>1</label>
        <note>allosteric activator</note>
    </ligand>
</feature>
<feature type="binding site" evidence="2">
    <location>
        <position position="116"/>
    </location>
    <ligand>
        <name>3',5'-cyclic GMP</name>
        <dbReference type="ChEBI" id="CHEBI:57746"/>
        <label>1</label>
        <note>allosteric activator</note>
    </ligand>
</feature>
<feature type="binding site" evidence="2">
    <location>
        <position position="118"/>
    </location>
    <ligand>
        <name>3',5'-cyclic GMP</name>
        <dbReference type="ChEBI" id="CHEBI:57746"/>
        <label>1</label>
        <note>allosteric activator</note>
    </ligand>
</feature>
<feature type="binding site" evidence="2">
    <location>
        <position position="125"/>
    </location>
    <ligand>
        <name>3',5'-cyclic GMP</name>
        <dbReference type="ChEBI" id="CHEBI:57746"/>
        <label>1</label>
        <note>allosteric activator</note>
    </ligand>
</feature>
<feature type="binding site" evidence="2">
    <location>
        <position position="126"/>
    </location>
    <ligand>
        <name>3',5'-cyclic GMP</name>
        <dbReference type="ChEBI" id="CHEBI:57746"/>
        <label>1</label>
        <note>allosteric activator</note>
    </ligand>
</feature>
<feature type="binding site" evidence="2">
    <location>
        <position position="466"/>
    </location>
    <ligand>
        <name>3',5'-cyclic GMP</name>
        <dbReference type="ChEBI" id="CHEBI:57746"/>
        <label>2</label>
        <note>allosteric activator</note>
    </ligand>
</feature>
<feature type="binding site" evidence="2">
    <location>
        <position position="475"/>
    </location>
    <ligand>
        <name>3',5'-cyclic GMP</name>
        <dbReference type="ChEBI" id="CHEBI:57746"/>
        <label>2</label>
        <note>allosteric activator</note>
    </ligand>
</feature>
<feature type="binding site" evidence="2">
    <location>
        <position position="476"/>
    </location>
    <ligand>
        <name>3',5'-cyclic GMP</name>
        <dbReference type="ChEBI" id="CHEBI:57746"/>
        <label>2</label>
        <note>allosteric activator</note>
    </ligand>
</feature>
<feature type="binding site" evidence="2">
    <location>
        <position position="478"/>
    </location>
    <ligand>
        <name>3',5'-cyclic GMP</name>
        <dbReference type="ChEBI" id="CHEBI:57746"/>
        <label>2</label>
        <note>allosteric activator</note>
    </ligand>
</feature>
<feature type="binding site" evidence="2">
    <location>
        <position position="485"/>
    </location>
    <ligand>
        <name>3',5'-cyclic GMP</name>
        <dbReference type="ChEBI" id="CHEBI:57746"/>
        <label>2</label>
        <note>allosteric activator</note>
    </ligand>
</feature>
<feature type="binding site" evidence="2">
    <location>
        <position position="486"/>
    </location>
    <ligand>
        <name>3',5'-cyclic GMP</name>
        <dbReference type="ChEBI" id="CHEBI:57746"/>
        <label>2</label>
        <note>allosteric activator</note>
    </ligand>
</feature>
<feature type="binding site" evidence="4">
    <location>
        <begin position="540"/>
        <end position="548"/>
    </location>
    <ligand>
        <name>ATP</name>
        <dbReference type="ChEBI" id="CHEBI:30616"/>
    </ligand>
</feature>
<feature type="binding site" evidence="4 7 13">
    <location>
        <position position="563"/>
    </location>
    <ligand>
        <name>ATP</name>
        <dbReference type="ChEBI" id="CHEBI:30616"/>
    </ligand>
</feature>
<feature type="site" description="Part of a catalytic triad required for cGMP binding and cGMP-dependent kinase activity" evidence="2">
    <location>
        <position position="477"/>
    </location>
</feature>
<feature type="site" description="Part of a catalytic triad required for cGMP binding and cGMP-dependent kinase activity" evidence="2">
    <location>
        <position position="525"/>
    </location>
</feature>
<feature type="site" description="Part of a catalytic triad required for cGMP binding and cGMP-dependent kinase activity" evidence="2">
    <location>
        <position position="526"/>
    </location>
</feature>
<feature type="helix" evidence="17">
    <location>
        <begin position="21"/>
        <end position="28"/>
    </location>
</feature>
<feature type="helix" evidence="17">
    <location>
        <begin position="36"/>
        <end position="46"/>
    </location>
</feature>
<feature type="helix" evidence="17">
    <location>
        <begin position="52"/>
        <end position="54"/>
    </location>
</feature>
<feature type="helix" evidence="17">
    <location>
        <begin position="57"/>
        <end position="66"/>
    </location>
</feature>
<feature type="strand" evidence="17">
    <location>
        <begin position="68"/>
        <end position="71"/>
    </location>
</feature>
<feature type="strand" evidence="17">
    <location>
        <begin position="76"/>
        <end position="78"/>
    </location>
</feature>
<feature type="strand" evidence="17">
    <location>
        <begin position="83"/>
        <end position="85"/>
    </location>
</feature>
<feature type="strand" evidence="17">
    <location>
        <begin position="87"/>
        <end position="94"/>
    </location>
</feature>
<feature type="strand" evidence="17">
    <location>
        <begin position="96"/>
        <end position="100"/>
    </location>
</feature>
<feature type="strand" evidence="17">
    <location>
        <begin position="103"/>
        <end position="108"/>
    </location>
</feature>
<feature type="helix" evidence="17">
    <location>
        <begin position="117"/>
        <end position="120"/>
    </location>
</feature>
<feature type="strand" evidence="17">
    <location>
        <begin position="126"/>
        <end position="131"/>
    </location>
</feature>
<feature type="strand" evidence="17">
    <location>
        <begin position="136"/>
        <end position="141"/>
    </location>
</feature>
<feature type="helix" evidence="17">
    <location>
        <begin position="142"/>
        <end position="165"/>
    </location>
</feature>
<feature type="helix" evidence="17">
    <location>
        <begin position="168"/>
        <end position="170"/>
    </location>
</feature>
<feature type="helix" evidence="17">
    <location>
        <begin position="175"/>
        <end position="182"/>
    </location>
</feature>
<feature type="strand" evidence="17">
    <location>
        <begin position="186"/>
        <end position="190"/>
    </location>
</feature>
<feature type="strand" evidence="17">
    <location>
        <begin position="195"/>
        <end position="197"/>
    </location>
</feature>
<feature type="strand" evidence="17">
    <location>
        <begin position="205"/>
        <end position="211"/>
    </location>
</feature>
<feature type="strand" evidence="17">
    <location>
        <begin position="214"/>
        <end position="218"/>
    </location>
</feature>
<feature type="strand" evidence="17">
    <location>
        <begin position="221"/>
        <end position="226"/>
    </location>
</feature>
<feature type="helix" evidence="17">
    <location>
        <begin position="234"/>
        <end position="238"/>
    </location>
</feature>
<feature type="strand" evidence="17">
    <location>
        <begin position="246"/>
        <end position="259"/>
    </location>
</feature>
<feature type="helix" evidence="17">
    <location>
        <begin position="260"/>
        <end position="266"/>
    </location>
</feature>
<feature type="helix" evidence="17">
    <location>
        <begin position="270"/>
        <end position="283"/>
    </location>
</feature>
<feature type="helix" evidence="17">
    <location>
        <begin position="289"/>
        <end position="291"/>
    </location>
</feature>
<feature type="helix" evidence="17">
    <location>
        <begin position="294"/>
        <end position="303"/>
    </location>
</feature>
<feature type="strand" evidence="17">
    <location>
        <begin position="305"/>
        <end position="309"/>
    </location>
</feature>
<feature type="strand" evidence="17">
    <location>
        <begin position="314"/>
        <end position="317"/>
    </location>
</feature>
<feature type="strand" evidence="17">
    <location>
        <begin position="324"/>
        <end position="332"/>
    </location>
</feature>
<feature type="strand" evidence="17">
    <location>
        <begin position="334"/>
        <end position="338"/>
    </location>
</feature>
<feature type="strand" evidence="17">
    <location>
        <begin position="341"/>
        <end position="346"/>
    </location>
</feature>
<feature type="helix" evidence="17">
    <location>
        <begin position="354"/>
        <end position="358"/>
    </location>
</feature>
<feature type="strand" evidence="17">
    <location>
        <begin position="366"/>
        <end position="380"/>
    </location>
</feature>
<feature type="helix" evidence="17">
    <location>
        <begin position="381"/>
        <end position="388"/>
    </location>
</feature>
<feature type="helix" evidence="17">
    <location>
        <begin position="393"/>
        <end position="406"/>
    </location>
</feature>
<feature type="helix" evidence="17">
    <location>
        <begin position="410"/>
        <end position="413"/>
    </location>
</feature>
<feature type="helix" evidence="17">
    <location>
        <begin position="417"/>
        <end position="425"/>
    </location>
</feature>
<feature type="strand" evidence="17">
    <location>
        <begin position="428"/>
        <end position="432"/>
    </location>
</feature>
<feature type="strand" evidence="17">
    <location>
        <begin position="437"/>
        <end position="439"/>
    </location>
</feature>
<feature type="strand" evidence="17">
    <location>
        <begin position="447"/>
        <end position="454"/>
    </location>
</feature>
<feature type="strand" evidence="17">
    <location>
        <begin position="456"/>
        <end position="460"/>
    </location>
</feature>
<feature type="strand" evidence="17">
    <location>
        <begin position="463"/>
        <end position="468"/>
    </location>
</feature>
<feature type="helix" evidence="17">
    <location>
        <begin position="476"/>
        <end position="479"/>
    </location>
</feature>
<feature type="strand" evidence="17">
    <location>
        <begin position="486"/>
        <end position="491"/>
    </location>
</feature>
<feature type="strand" evidence="17">
    <location>
        <begin position="496"/>
        <end position="502"/>
    </location>
</feature>
<feature type="helix" evidence="17">
    <location>
        <begin position="503"/>
        <end position="507"/>
    </location>
</feature>
<feature type="helix" evidence="17">
    <location>
        <begin position="512"/>
        <end position="526"/>
    </location>
</feature>
<feature type="helix" evidence="17">
    <location>
        <begin position="531"/>
        <end position="533"/>
    </location>
</feature>
<feature type="strand" evidence="17">
    <location>
        <begin position="534"/>
        <end position="541"/>
    </location>
</feature>
<feature type="strand" evidence="17">
    <location>
        <begin position="544"/>
        <end position="553"/>
    </location>
</feature>
<feature type="turn" evidence="17">
    <location>
        <begin position="554"/>
        <end position="556"/>
    </location>
</feature>
<feature type="strand" evidence="17">
    <location>
        <begin position="559"/>
        <end position="566"/>
    </location>
</feature>
<feature type="helix" evidence="17">
    <location>
        <begin position="567"/>
        <end position="572"/>
    </location>
</feature>
<feature type="helix" evidence="17">
    <location>
        <begin position="576"/>
        <end position="588"/>
    </location>
</feature>
<feature type="strand" evidence="17">
    <location>
        <begin position="597"/>
        <end position="601"/>
    </location>
</feature>
<feature type="strand" evidence="17">
    <location>
        <begin position="604"/>
        <end position="612"/>
    </location>
</feature>
<feature type="helix" evidence="17">
    <location>
        <begin position="619"/>
        <end position="626"/>
    </location>
</feature>
<feature type="helix" evidence="17">
    <location>
        <begin position="631"/>
        <end position="650"/>
    </location>
</feature>
<feature type="helix" evidence="17">
    <location>
        <begin position="660"/>
        <end position="662"/>
    </location>
</feature>
<feature type="strand" evidence="17">
    <location>
        <begin position="663"/>
        <end position="665"/>
    </location>
</feature>
<feature type="strand" evidence="17">
    <location>
        <begin position="671"/>
        <end position="673"/>
    </location>
</feature>
<feature type="helix" evidence="17">
    <location>
        <begin position="693"/>
        <end position="695"/>
    </location>
</feature>
<feature type="helix" evidence="17">
    <location>
        <begin position="698"/>
        <end position="701"/>
    </location>
</feature>
<feature type="helix" evidence="17">
    <location>
        <begin position="710"/>
        <end position="723"/>
    </location>
</feature>
<feature type="strand" evidence="17">
    <location>
        <begin position="728"/>
        <end position="732"/>
    </location>
</feature>
<feature type="helix" evidence="17">
    <location>
        <begin position="736"/>
        <end position="745"/>
    </location>
</feature>
<feature type="helix" evidence="17">
    <location>
        <begin position="757"/>
        <end position="766"/>
    </location>
</feature>
<feature type="helix" evidence="17">
    <location>
        <begin position="771"/>
        <end position="773"/>
    </location>
</feature>
<feature type="turn" evidence="17">
    <location>
        <begin position="779"/>
        <end position="782"/>
    </location>
</feature>
<feature type="helix" evidence="17">
    <location>
        <begin position="783"/>
        <end position="786"/>
    </location>
</feature>
<feature type="helix" evidence="17">
    <location>
        <begin position="789"/>
        <end position="791"/>
    </location>
</feature>
<feature type="helix" evidence="17">
    <location>
        <begin position="796"/>
        <end position="800"/>
    </location>
</feature>
<organism evidence="10">
    <name type="scientific">Plasmodium vivax (strain Salvador I)</name>
    <dbReference type="NCBI Taxonomy" id="126793"/>
    <lineage>
        <taxon>Eukaryota</taxon>
        <taxon>Sar</taxon>
        <taxon>Alveolata</taxon>
        <taxon>Apicomplexa</taxon>
        <taxon>Aconoidasida</taxon>
        <taxon>Haemosporida</taxon>
        <taxon>Plasmodiidae</taxon>
        <taxon>Plasmodium</taxon>
        <taxon>Plasmodium (Plasmodium)</taxon>
    </lineage>
</organism>
<comment type="function">
    <text evidence="1 2">Serine/threonine protein kinase which acts as a downstream effector of the second messenger cGMP. Controls the release of Ca(2+) from intracellular stores by regulating phosphoinositide biosynthesis. Ca(2+) signals are essential for merozoite and sporozoite invasion and egress from host hepatocytes and erythrocytes, and, in the mosquito vector, for gametocyte activation, and ookinete and sporozoite motility (By similarity). During the host liver stage, regulates the initial invasion of host hepatocytes by sporozoites by regulating sporozoite motility and microneme exocytosis. Following parasite development in the hepatocytes, required for the release of merosomes, a vesicle containing the mature merozoites (By similarity). During the asexual blood stage, required for the progression from schizont to the ring stage following merozoite invasion of host erythrocytes and for merozoite egress. Regulates merozoite egress by promoting the release of exonemes and micronemes which contain proteins essential for egress. Phosphorylates CDPK1 predominantly at the late schizont stage; phosphorylation at 'Ser-64' regulates CDPK1 protein-protein interaction and phosphorylation at 'Thr-231' may regulate CDPK1 kinase activity. In the mosquito vector, required for the initiation of gametogenesis induced by xanthurenic acid, specifically the gametocyte differentiation from the crescent-shaped form to the spherical form (By similarity). Required for the gliding motility of ookinetes to reach and penetrate the midgut epithelium by promoting Ca(2+)-mediated activation of CDPK1 and CDPK4. Also required for microneme secretion in ookinete by promoting Ca(2+)-mediated activation of CDPK3 (By similarity).</text>
</comment>
<comment type="catalytic activity">
    <reaction evidence="2">
        <text>L-seryl-[protein] + ATP = O-phospho-L-seryl-[protein] + ADP + H(+)</text>
        <dbReference type="Rhea" id="RHEA:17989"/>
        <dbReference type="Rhea" id="RHEA-COMP:9863"/>
        <dbReference type="Rhea" id="RHEA-COMP:11604"/>
        <dbReference type="ChEBI" id="CHEBI:15378"/>
        <dbReference type="ChEBI" id="CHEBI:29999"/>
        <dbReference type="ChEBI" id="CHEBI:30616"/>
        <dbReference type="ChEBI" id="CHEBI:83421"/>
        <dbReference type="ChEBI" id="CHEBI:456216"/>
        <dbReference type="EC" id="2.7.11.12"/>
    </reaction>
</comment>
<comment type="catalytic activity">
    <reaction evidence="2">
        <text>L-threonyl-[protein] + ATP = O-phospho-L-threonyl-[protein] + ADP + H(+)</text>
        <dbReference type="Rhea" id="RHEA:46608"/>
        <dbReference type="Rhea" id="RHEA-COMP:11060"/>
        <dbReference type="Rhea" id="RHEA-COMP:11605"/>
        <dbReference type="ChEBI" id="CHEBI:15378"/>
        <dbReference type="ChEBI" id="CHEBI:30013"/>
        <dbReference type="ChEBI" id="CHEBI:30616"/>
        <dbReference type="ChEBI" id="CHEBI:61977"/>
        <dbReference type="ChEBI" id="CHEBI:456216"/>
        <dbReference type="EC" id="2.7.11.12"/>
    </reaction>
</comment>
<comment type="cofactor">
    <cofactor evidence="2">
        <name>Mg(2+)</name>
        <dbReference type="ChEBI" id="CHEBI:18420"/>
    </cofactor>
</comment>
<comment type="activity regulation">
    <text evidence="2">Activated by cGMP. Not activated by cAMP. cGMP binding allosterically triggers a conformational change at the alpha C-helix of cGMP-binding domain 4, which bridges the regulatory and catalytic domains, causing the capping triad, composed of Arg-477, Gln-525 and Asp-526, to form and stabilize the active conformation. The cGMP-binding domains acts cooperatively to activate PKG.</text>
</comment>
<comment type="subunit">
    <text evidence="2">Monomer.</text>
</comment>
<comment type="subcellular location">
    <subcellularLocation>
        <location evidence="2">Cytoplasm</location>
    </subcellularLocation>
    <subcellularLocation>
        <location evidence="2">Endoplasmic reticulum membrane</location>
        <topology evidence="2">Peripheral membrane protein</topology>
        <orientation evidence="2">Cytoplasmic side</orientation>
    </subcellularLocation>
    <text evidence="2">Predominantly localizes to the cytoplasm during schizogony.</text>
</comment>
<comment type="domain">
    <text evidence="2">The cNMP-binding domains 1, 2 and 4 bind preferentially cGMP. The cNMP-binding domain 4 binds cGMP with the highest affinity and is highly selective for cGMP. The cNMP-binding domain 3 does not bind cGMP but is required for cGMP-dependent catalytic activity. The cNMP-binding domains 1, 2 and 4 can bind cAMP but with less affinity.</text>
</comment>
<comment type="domain">
    <text evidence="2">The autoinhibitory segment (AIS) interacts with the active site and inhibits catalytic activity.</text>
</comment>
<comment type="PTM">
    <text evidence="2">Autophosphorylated.</text>
</comment>
<comment type="similarity">
    <text evidence="8">Belongs to the protein kinase superfamily. AGC Ser/Thr protein kinase family. cGMP subfamily.</text>
</comment>
<evidence type="ECO:0000250" key="1">
    <source>
        <dbReference type="UniProtKB" id="A0A509AKL0"/>
    </source>
</evidence>
<evidence type="ECO:0000250" key="2">
    <source>
        <dbReference type="UniProtKB" id="Q8I719"/>
    </source>
</evidence>
<evidence type="ECO:0000255" key="3">
    <source>
        <dbReference type="PROSITE-ProRule" id="PRU00060"/>
    </source>
</evidence>
<evidence type="ECO:0000255" key="4">
    <source>
        <dbReference type="PROSITE-ProRule" id="PRU00159"/>
    </source>
</evidence>
<evidence type="ECO:0000255" key="5">
    <source>
        <dbReference type="PROSITE-ProRule" id="PRU00618"/>
    </source>
</evidence>
<evidence type="ECO:0000256" key="6">
    <source>
        <dbReference type="SAM" id="MobiDB-lite"/>
    </source>
</evidence>
<evidence type="ECO:0000269" key="7">
    <source>
    </source>
</evidence>
<evidence type="ECO:0000305" key="8"/>
<evidence type="ECO:0000312" key="9">
    <source>
        <dbReference type="EMBL" id="EDL46881.1"/>
    </source>
</evidence>
<evidence type="ECO:0000312" key="10">
    <source>
        <dbReference type="Proteomes" id="UP000008333"/>
    </source>
</evidence>
<evidence type="ECO:0007744" key="11">
    <source>
        <dbReference type="PDB" id="4RZ7"/>
    </source>
</evidence>
<evidence type="ECO:0007744" key="12">
    <source>
        <dbReference type="PDB" id="5DYL"/>
    </source>
</evidence>
<evidence type="ECO:0007744" key="13">
    <source>
        <dbReference type="PDB" id="5DZC"/>
    </source>
</evidence>
<evidence type="ECO:0007744" key="14">
    <source>
        <dbReference type="PDB" id="5EZR"/>
    </source>
</evidence>
<evidence type="ECO:0007744" key="15">
    <source>
        <dbReference type="PDB" id="5F0A"/>
    </source>
</evidence>
<evidence type="ECO:0007744" key="16">
    <source>
        <dbReference type="PDB" id="5FET"/>
    </source>
</evidence>
<evidence type="ECO:0007829" key="17">
    <source>
        <dbReference type="PDB" id="5DZC"/>
    </source>
</evidence>
<name>KGP_PLAVS</name>
<proteinExistence type="evidence at protein level"/>
<gene>
    <name evidence="8" type="primary">PKG</name>
    <name evidence="9" type="ORF">PVX_084705</name>
</gene>